<organism>
    <name type="scientific">Streptococcus pneumoniae (strain P1031)</name>
    <dbReference type="NCBI Taxonomy" id="488223"/>
    <lineage>
        <taxon>Bacteria</taxon>
        <taxon>Bacillati</taxon>
        <taxon>Bacillota</taxon>
        <taxon>Bacilli</taxon>
        <taxon>Lactobacillales</taxon>
        <taxon>Streptococcaceae</taxon>
        <taxon>Streptococcus</taxon>
    </lineage>
</organism>
<comment type="function">
    <text evidence="1">Allows the formation of correctly charged Asn-tRNA(Asn) or Gln-tRNA(Gln) through the transamidation of misacylated Asp-tRNA(Asn) or Glu-tRNA(Gln) in organisms which lack either or both of asparaginyl-tRNA or glutaminyl-tRNA synthetases. The reaction takes place in the presence of glutamine and ATP through an activated phospho-Asp-tRNA(Asn) or phospho-Glu-tRNA(Gln).</text>
</comment>
<comment type="catalytic activity">
    <reaction evidence="1">
        <text>L-glutamyl-tRNA(Gln) + L-glutamine + ATP + H2O = L-glutaminyl-tRNA(Gln) + L-glutamate + ADP + phosphate + H(+)</text>
        <dbReference type="Rhea" id="RHEA:17521"/>
        <dbReference type="Rhea" id="RHEA-COMP:9681"/>
        <dbReference type="Rhea" id="RHEA-COMP:9684"/>
        <dbReference type="ChEBI" id="CHEBI:15377"/>
        <dbReference type="ChEBI" id="CHEBI:15378"/>
        <dbReference type="ChEBI" id="CHEBI:29985"/>
        <dbReference type="ChEBI" id="CHEBI:30616"/>
        <dbReference type="ChEBI" id="CHEBI:43474"/>
        <dbReference type="ChEBI" id="CHEBI:58359"/>
        <dbReference type="ChEBI" id="CHEBI:78520"/>
        <dbReference type="ChEBI" id="CHEBI:78521"/>
        <dbReference type="ChEBI" id="CHEBI:456216"/>
    </reaction>
</comment>
<comment type="catalytic activity">
    <reaction evidence="1">
        <text>L-aspartyl-tRNA(Asn) + L-glutamine + ATP + H2O = L-asparaginyl-tRNA(Asn) + L-glutamate + ADP + phosphate + 2 H(+)</text>
        <dbReference type="Rhea" id="RHEA:14513"/>
        <dbReference type="Rhea" id="RHEA-COMP:9674"/>
        <dbReference type="Rhea" id="RHEA-COMP:9677"/>
        <dbReference type="ChEBI" id="CHEBI:15377"/>
        <dbReference type="ChEBI" id="CHEBI:15378"/>
        <dbReference type="ChEBI" id="CHEBI:29985"/>
        <dbReference type="ChEBI" id="CHEBI:30616"/>
        <dbReference type="ChEBI" id="CHEBI:43474"/>
        <dbReference type="ChEBI" id="CHEBI:58359"/>
        <dbReference type="ChEBI" id="CHEBI:78515"/>
        <dbReference type="ChEBI" id="CHEBI:78516"/>
        <dbReference type="ChEBI" id="CHEBI:456216"/>
    </reaction>
</comment>
<comment type="subunit">
    <text evidence="1">Heterotrimer of A, B and C subunits.</text>
</comment>
<comment type="similarity">
    <text evidence="1">Belongs to the GatB/GatE family. GatB subfamily.</text>
</comment>
<protein>
    <recommendedName>
        <fullName evidence="1">Aspartyl/glutamyl-tRNA(Asn/Gln) amidotransferase subunit B</fullName>
        <shortName evidence="1">Asp/Glu-ADT subunit B</shortName>
        <ecNumber evidence="1">6.3.5.-</ecNumber>
    </recommendedName>
</protein>
<gene>
    <name evidence="1" type="primary">gatB</name>
    <name type="ordered locus">SPP_0467</name>
</gene>
<sequence length="480" mass="53759">MNFETVIGLEVHVELNTNSKIFSPTSAHFGNDQNANTNVIDWSFPGVLPVLNKGVVDAGIKAALALNMDIHKKMHFDRKNYFYPDNPKAYQISQFDEPIGYNGWIEVKLEDGTTKKIGIERAHLEEDAGKNTHGTDGYSYVDLNRQGVPLIEIVSEADMRSPEEAYAYLTALKEVIQYAGISDVKMEEGSMRVDANISLRPYGQEKFGTKTELKNLNSFSNVRKGLEYEIQRQAEILRSGGQIRQETRRYDEANKTTILMRVKEGAADYRYFPEPDLPLFEISDEWIEEMRTELPEFPKERRARYVSDLGLSDYDANQLTANKVTSDFFEKAVALGGDAKQVSNWLQGEVAQFLNAEGKTLEQIELTPENLVEMITIIEDGTISSKIAKKVFVHLAKNGGGAREYVEKAGMVQISDPAILIPIIHQVFADNEAAVADFKSGKRNADKAFTGFLMKATKGQANPQVALKLLAQELAKLKEN</sequence>
<keyword id="KW-0067">ATP-binding</keyword>
<keyword id="KW-0436">Ligase</keyword>
<keyword id="KW-0547">Nucleotide-binding</keyword>
<keyword id="KW-0648">Protein biosynthesis</keyword>
<reference key="1">
    <citation type="journal article" date="2010" name="Genome Biol.">
        <title>Structure and dynamics of the pan-genome of Streptococcus pneumoniae and closely related species.</title>
        <authorList>
            <person name="Donati C."/>
            <person name="Hiller N.L."/>
            <person name="Tettelin H."/>
            <person name="Muzzi A."/>
            <person name="Croucher N.J."/>
            <person name="Angiuoli S.V."/>
            <person name="Oggioni M."/>
            <person name="Dunning Hotopp J.C."/>
            <person name="Hu F.Z."/>
            <person name="Riley D.R."/>
            <person name="Covacci A."/>
            <person name="Mitchell T.J."/>
            <person name="Bentley S.D."/>
            <person name="Kilian M."/>
            <person name="Ehrlich G.D."/>
            <person name="Rappuoli R."/>
            <person name="Moxon E.R."/>
            <person name="Masignani V."/>
        </authorList>
    </citation>
    <scope>NUCLEOTIDE SEQUENCE [LARGE SCALE GENOMIC DNA]</scope>
    <source>
        <strain>P1031</strain>
    </source>
</reference>
<evidence type="ECO:0000255" key="1">
    <source>
        <dbReference type="HAMAP-Rule" id="MF_00121"/>
    </source>
</evidence>
<proteinExistence type="inferred from homology"/>
<dbReference type="EC" id="6.3.5.-" evidence="1"/>
<dbReference type="EMBL" id="CP000920">
    <property type="protein sequence ID" value="ACO21018.1"/>
    <property type="molecule type" value="Genomic_DNA"/>
</dbReference>
<dbReference type="RefSeq" id="WP_001008678.1">
    <property type="nucleotide sequence ID" value="NC_012467.1"/>
</dbReference>
<dbReference type="SMR" id="C1CIT7"/>
<dbReference type="KEGG" id="spp:SPP_0467"/>
<dbReference type="HOGENOM" id="CLU_019240_0_0_9"/>
<dbReference type="GO" id="GO:0050566">
    <property type="term" value="F:asparaginyl-tRNA synthase (glutamine-hydrolyzing) activity"/>
    <property type="evidence" value="ECO:0007669"/>
    <property type="project" value="RHEA"/>
</dbReference>
<dbReference type="GO" id="GO:0005524">
    <property type="term" value="F:ATP binding"/>
    <property type="evidence" value="ECO:0007669"/>
    <property type="project" value="UniProtKB-KW"/>
</dbReference>
<dbReference type="GO" id="GO:0050567">
    <property type="term" value="F:glutaminyl-tRNA synthase (glutamine-hydrolyzing) activity"/>
    <property type="evidence" value="ECO:0007669"/>
    <property type="project" value="UniProtKB-UniRule"/>
</dbReference>
<dbReference type="GO" id="GO:0070681">
    <property type="term" value="P:glutaminyl-tRNAGln biosynthesis via transamidation"/>
    <property type="evidence" value="ECO:0007669"/>
    <property type="project" value="TreeGrafter"/>
</dbReference>
<dbReference type="GO" id="GO:0006412">
    <property type="term" value="P:translation"/>
    <property type="evidence" value="ECO:0007669"/>
    <property type="project" value="UniProtKB-UniRule"/>
</dbReference>
<dbReference type="FunFam" id="1.10.10.410:FF:000001">
    <property type="entry name" value="Aspartyl/glutamyl-tRNA(Asn/Gln) amidotransferase subunit B"/>
    <property type="match status" value="1"/>
</dbReference>
<dbReference type="FunFam" id="1.10.150.380:FF:000001">
    <property type="entry name" value="Aspartyl/glutamyl-tRNA(Asn/Gln) amidotransferase subunit B"/>
    <property type="match status" value="1"/>
</dbReference>
<dbReference type="Gene3D" id="1.10.10.410">
    <property type="match status" value="1"/>
</dbReference>
<dbReference type="Gene3D" id="1.10.150.380">
    <property type="entry name" value="GatB domain, N-terminal subdomain"/>
    <property type="match status" value="1"/>
</dbReference>
<dbReference type="HAMAP" id="MF_00121">
    <property type="entry name" value="GatB"/>
    <property type="match status" value="1"/>
</dbReference>
<dbReference type="InterPro" id="IPR017959">
    <property type="entry name" value="Asn/Gln-tRNA_amidoTrfase_suB/E"/>
</dbReference>
<dbReference type="InterPro" id="IPR006075">
    <property type="entry name" value="Asn/Gln-tRNA_Trfase_suB/E_cat"/>
</dbReference>
<dbReference type="InterPro" id="IPR018027">
    <property type="entry name" value="Asn/Gln_amidotransferase"/>
</dbReference>
<dbReference type="InterPro" id="IPR003789">
    <property type="entry name" value="Asn/Gln_tRNA_amidoTrase-B-like"/>
</dbReference>
<dbReference type="InterPro" id="IPR004413">
    <property type="entry name" value="GatB"/>
</dbReference>
<dbReference type="InterPro" id="IPR042114">
    <property type="entry name" value="GatB_C_1"/>
</dbReference>
<dbReference type="InterPro" id="IPR023168">
    <property type="entry name" value="GatB_Yqey_C_2"/>
</dbReference>
<dbReference type="InterPro" id="IPR017958">
    <property type="entry name" value="Gln-tRNA_amidoTrfase_suB_CS"/>
</dbReference>
<dbReference type="InterPro" id="IPR014746">
    <property type="entry name" value="Gln_synth/guanido_kin_cat_dom"/>
</dbReference>
<dbReference type="NCBIfam" id="TIGR00133">
    <property type="entry name" value="gatB"/>
    <property type="match status" value="1"/>
</dbReference>
<dbReference type="NCBIfam" id="NF004011">
    <property type="entry name" value="PRK05477.1-1"/>
    <property type="match status" value="1"/>
</dbReference>
<dbReference type="NCBIfam" id="NF004012">
    <property type="entry name" value="PRK05477.1-2"/>
    <property type="match status" value="1"/>
</dbReference>
<dbReference type="NCBIfam" id="NF004014">
    <property type="entry name" value="PRK05477.1-4"/>
    <property type="match status" value="1"/>
</dbReference>
<dbReference type="PANTHER" id="PTHR11659">
    <property type="entry name" value="GLUTAMYL-TRNA GLN AMIDOTRANSFERASE SUBUNIT B MITOCHONDRIAL AND PROKARYOTIC PET112-RELATED"/>
    <property type="match status" value="1"/>
</dbReference>
<dbReference type="PANTHER" id="PTHR11659:SF0">
    <property type="entry name" value="GLUTAMYL-TRNA(GLN) AMIDOTRANSFERASE SUBUNIT B, MITOCHONDRIAL"/>
    <property type="match status" value="1"/>
</dbReference>
<dbReference type="Pfam" id="PF02934">
    <property type="entry name" value="GatB_N"/>
    <property type="match status" value="1"/>
</dbReference>
<dbReference type="Pfam" id="PF02637">
    <property type="entry name" value="GatB_Yqey"/>
    <property type="match status" value="1"/>
</dbReference>
<dbReference type="SMART" id="SM00845">
    <property type="entry name" value="GatB_Yqey"/>
    <property type="match status" value="1"/>
</dbReference>
<dbReference type="SUPFAM" id="SSF89095">
    <property type="entry name" value="GatB/YqeY motif"/>
    <property type="match status" value="1"/>
</dbReference>
<dbReference type="SUPFAM" id="SSF55931">
    <property type="entry name" value="Glutamine synthetase/guanido kinase"/>
    <property type="match status" value="1"/>
</dbReference>
<dbReference type="PROSITE" id="PS01234">
    <property type="entry name" value="GATB"/>
    <property type="match status" value="1"/>
</dbReference>
<accession>C1CIT7</accession>
<feature type="chain" id="PRO_1000122540" description="Aspartyl/glutamyl-tRNA(Asn/Gln) amidotransferase subunit B">
    <location>
        <begin position="1"/>
        <end position="480"/>
    </location>
</feature>
<name>GATB_STRZP</name>